<proteinExistence type="predicted"/>
<accession>P9WM72</accession>
<accession>L0T4A2</accession>
<accession>P0A5C3</accession>
<accession>Q10885</accession>
<sequence>MSVYKHAPSRVRLRQTRSTVVKGRSGSLSWRRVRTGDLGLAVWGGREEYRAVKPGTPGIQPKGDMMTVTVVDAGPGRVSRSVEVAAPAAELFAIVADPRRHRELDGSGTVRGNIKVPAKLVVGSKFSTKMKLFGLPYRITSRVTALKPNELVECSHPLGHRWRWEFESLSPTLTRVTETFDYHAAGAIKNGLKFYEMTGFAKSNAAGIEATLAKLSDQYARGRA</sequence>
<gene>
    <name type="ordered locus">MT0096</name>
</gene>
<protein>
    <recommendedName>
        <fullName>Uncharacterized protein MT0096</fullName>
    </recommendedName>
</protein>
<feature type="chain" id="PRO_0000427354" description="Uncharacterized protein MT0096">
    <location>
        <begin position="1"/>
        <end position="224"/>
    </location>
</feature>
<keyword id="KW-1185">Reference proteome</keyword>
<dbReference type="EMBL" id="AE000516">
    <property type="protein sequence ID" value="AAK44319.1"/>
    <property type="molecule type" value="Genomic_DNA"/>
</dbReference>
<dbReference type="PIR" id="H70749">
    <property type="entry name" value="H70749"/>
</dbReference>
<dbReference type="SMR" id="P9WM72"/>
<dbReference type="KEGG" id="mtc:MT0096"/>
<dbReference type="PATRIC" id="fig|83331.31.peg.101"/>
<dbReference type="HOGENOM" id="CLU_112867_2_0_11"/>
<dbReference type="Proteomes" id="UP000001020">
    <property type="component" value="Chromosome"/>
</dbReference>
<dbReference type="CDD" id="cd07825">
    <property type="entry name" value="SRPBCC_7"/>
    <property type="match status" value="1"/>
</dbReference>
<dbReference type="Gene3D" id="3.30.530.20">
    <property type="match status" value="1"/>
</dbReference>
<dbReference type="InterPro" id="IPR019587">
    <property type="entry name" value="Polyketide_cyclase/dehydratase"/>
</dbReference>
<dbReference type="InterPro" id="IPR023393">
    <property type="entry name" value="START-like_dom_sf"/>
</dbReference>
<dbReference type="Pfam" id="PF10604">
    <property type="entry name" value="Polyketide_cyc2"/>
    <property type="match status" value="1"/>
</dbReference>
<dbReference type="SUPFAM" id="SSF55961">
    <property type="entry name" value="Bet v1-like"/>
    <property type="match status" value="1"/>
</dbReference>
<reference key="1">
    <citation type="journal article" date="2002" name="J. Bacteriol.">
        <title>Whole-genome comparison of Mycobacterium tuberculosis clinical and laboratory strains.</title>
        <authorList>
            <person name="Fleischmann R.D."/>
            <person name="Alland D."/>
            <person name="Eisen J.A."/>
            <person name="Carpenter L."/>
            <person name="White O."/>
            <person name="Peterson J.D."/>
            <person name="DeBoy R.T."/>
            <person name="Dodson R.J."/>
            <person name="Gwinn M.L."/>
            <person name="Haft D.H."/>
            <person name="Hickey E.K."/>
            <person name="Kolonay J.F."/>
            <person name="Nelson W.C."/>
            <person name="Umayam L.A."/>
            <person name="Ermolaeva M.D."/>
            <person name="Salzberg S.L."/>
            <person name="Delcher A."/>
            <person name="Utterback T.R."/>
            <person name="Weidman J.F."/>
            <person name="Khouri H.M."/>
            <person name="Gill J."/>
            <person name="Mikula A."/>
            <person name="Bishai W."/>
            <person name="Jacobs W.R. Jr."/>
            <person name="Venter J.C."/>
            <person name="Fraser C.M."/>
        </authorList>
    </citation>
    <scope>NUCLEOTIDE SEQUENCE [LARGE SCALE GENOMIC DNA]</scope>
    <source>
        <strain>CDC 1551 / Oshkosh</strain>
    </source>
</reference>
<organism>
    <name type="scientific">Mycobacterium tuberculosis (strain CDC 1551 / Oshkosh)</name>
    <dbReference type="NCBI Taxonomy" id="83331"/>
    <lineage>
        <taxon>Bacteria</taxon>
        <taxon>Bacillati</taxon>
        <taxon>Actinomycetota</taxon>
        <taxon>Actinomycetes</taxon>
        <taxon>Mycobacteriales</taxon>
        <taxon>Mycobacteriaceae</taxon>
        <taxon>Mycobacterium</taxon>
        <taxon>Mycobacterium tuberculosis complex</taxon>
    </lineage>
</organism>
<name>Y088_MYCTO</name>